<gene>
    <name evidence="1" type="primary">lysS</name>
    <name type="ordered locus">PTH_0263</name>
</gene>
<proteinExistence type="inferred from homology"/>
<name>SYK_PELTS</name>
<protein>
    <recommendedName>
        <fullName evidence="1">Lysine--tRNA ligase</fullName>
        <ecNumber evidence="1">6.1.1.6</ecNumber>
    </recommendedName>
    <alternativeName>
        <fullName evidence="1">Lysyl-tRNA synthetase</fullName>
        <shortName evidence="1">LysRS</shortName>
    </alternativeName>
</protein>
<accession>A5D5Q4</accession>
<organism>
    <name type="scientific">Pelotomaculum thermopropionicum (strain DSM 13744 / JCM 10971 / SI)</name>
    <dbReference type="NCBI Taxonomy" id="370438"/>
    <lineage>
        <taxon>Bacteria</taxon>
        <taxon>Bacillati</taxon>
        <taxon>Bacillota</taxon>
        <taxon>Clostridia</taxon>
        <taxon>Eubacteriales</taxon>
        <taxon>Desulfotomaculaceae</taxon>
        <taxon>Pelotomaculum</taxon>
    </lineage>
</organism>
<evidence type="ECO:0000255" key="1">
    <source>
        <dbReference type="HAMAP-Rule" id="MF_00252"/>
    </source>
</evidence>
<keyword id="KW-0030">Aminoacyl-tRNA synthetase</keyword>
<keyword id="KW-0067">ATP-binding</keyword>
<keyword id="KW-0963">Cytoplasm</keyword>
<keyword id="KW-0436">Ligase</keyword>
<keyword id="KW-0460">Magnesium</keyword>
<keyword id="KW-0479">Metal-binding</keyword>
<keyword id="KW-0547">Nucleotide-binding</keyword>
<keyword id="KW-0648">Protein biosynthesis</keyword>
<keyword id="KW-1185">Reference proteome</keyword>
<dbReference type="EC" id="6.1.1.6" evidence="1"/>
<dbReference type="EMBL" id="AP009389">
    <property type="protein sequence ID" value="BAF58444.1"/>
    <property type="molecule type" value="Genomic_DNA"/>
</dbReference>
<dbReference type="SMR" id="A5D5Q4"/>
<dbReference type="STRING" id="370438.PTH_0263"/>
<dbReference type="KEGG" id="pth:PTH_0263"/>
<dbReference type="eggNOG" id="COG1190">
    <property type="taxonomic scope" value="Bacteria"/>
</dbReference>
<dbReference type="HOGENOM" id="CLU_008255_6_0_9"/>
<dbReference type="Proteomes" id="UP000006556">
    <property type="component" value="Chromosome"/>
</dbReference>
<dbReference type="GO" id="GO:0005829">
    <property type="term" value="C:cytosol"/>
    <property type="evidence" value="ECO:0007669"/>
    <property type="project" value="TreeGrafter"/>
</dbReference>
<dbReference type="GO" id="GO:0005524">
    <property type="term" value="F:ATP binding"/>
    <property type="evidence" value="ECO:0007669"/>
    <property type="project" value="UniProtKB-UniRule"/>
</dbReference>
<dbReference type="GO" id="GO:0140096">
    <property type="term" value="F:catalytic activity, acting on a protein"/>
    <property type="evidence" value="ECO:0007669"/>
    <property type="project" value="UniProtKB-ARBA"/>
</dbReference>
<dbReference type="GO" id="GO:0004824">
    <property type="term" value="F:lysine-tRNA ligase activity"/>
    <property type="evidence" value="ECO:0007669"/>
    <property type="project" value="UniProtKB-UniRule"/>
</dbReference>
<dbReference type="GO" id="GO:0000287">
    <property type="term" value="F:magnesium ion binding"/>
    <property type="evidence" value="ECO:0007669"/>
    <property type="project" value="UniProtKB-UniRule"/>
</dbReference>
<dbReference type="GO" id="GO:0016740">
    <property type="term" value="F:transferase activity"/>
    <property type="evidence" value="ECO:0007669"/>
    <property type="project" value="UniProtKB-ARBA"/>
</dbReference>
<dbReference type="GO" id="GO:0000049">
    <property type="term" value="F:tRNA binding"/>
    <property type="evidence" value="ECO:0007669"/>
    <property type="project" value="TreeGrafter"/>
</dbReference>
<dbReference type="GO" id="GO:0006430">
    <property type="term" value="P:lysyl-tRNA aminoacylation"/>
    <property type="evidence" value="ECO:0007669"/>
    <property type="project" value="UniProtKB-UniRule"/>
</dbReference>
<dbReference type="CDD" id="cd00775">
    <property type="entry name" value="LysRS_core"/>
    <property type="match status" value="1"/>
</dbReference>
<dbReference type="CDD" id="cd04322">
    <property type="entry name" value="LysRS_N"/>
    <property type="match status" value="1"/>
</dbReference>
<dbReference type="FunFam" id="2.40.50.140:FF:000024">
    <property type="entry name" value="Lysine--tRNA ligase"/>
    <property type="match status" value="1"/>
</dbReference>
<dbReference type="FunFam" id="3.30.930.10:FF:000001">
    <property type="entry name" value="Lysine--tRNA ligase"/>
    <property type="match status" value="1"/>
</dbReference>
<dbReference type="Gene3D" id="3.30.930.10">
    <property type="entry name" value="Bira Bifunctional Protein, Domain 2"/>
    <property type="match status" value="1"/>
</dbReference>
<dbReference type="Gene3D" id="2.40.50.140">
    <property type="entry name" value="Nucleic acid-binding proteins"/>
    <property type="match status" value="1"/>
</dbReference>
<dbReference type="HAMAP" id="MF_00252">
    <property type="entry name" value="Lys_tRNA_synth_class2"/>
    <property type="match status" value="1"/>
</dbReference>
<dbReference type="InterPro" id="IPR004364">
    <property type="entry name" value="Aa-tRNA-synt_II"/>
</dbReference>
<dbReference type="InterPro" id="IPR006195">
    <property type="entry name" value="aa-tRNA-synth_II"/>
</dbReference>
<dbReference type="InterPro" id="IPR045864">
    <property type="entry name" value="aa-tRNA-synth_II/BPL/LPL"/>
</dbReference>
<dbReference type="InterPro" id="IPR002313">
    <property type="entry name" value="Lys-tRNA-ligase_II"/>
</dbReference>
<dbReference type="InterPro" id="IPR034762">
    <property type="entry name" value="Lys-tRNA-ligase_II_bac/euk"/>
</dbReference>
<dbReference type="InterPro" id="IPR044136">
    <property type="entry name" value="Lys-tRNA-ligase_II_N"/>
</dbReference>
<dbReference type="InterPro" id="IPR018149">
    <property type="entry name" value="Lys-tRNA-synth_II_C"/>
</dbReference>
<dbReference type="InterPro" id="IPR012340">
    <property type="entry name" value="NA-bd_OB-fold"/>
</dbReference>
<dbReference type="InterPro" id="IPR004365">
    <property type="entry name" value="NA-bd_OB_tRNA"/>
</dbReference>
<dbReference type="NCBIfam" id="TIGR00499">
    <property type="entry name" value="lysS_bact"/>
    <property type="match status" value="1"/>
</dbReference>
<dbReference type="NCBIfam" id="NF001756">
    <property type="entry name" value="PRK00484.1"/>
    <property type="match status" value="1"/>
</dbReference>
<dbReference type="PANTHER" id="PTHR42918:SF15">
    <property type="entry name" value="LYSINE--TRNA LIGASE, CHLOROPLASTIC_MITOCHONDRIAL"/>
    <property type="match status" value="1"/>
</dbReference>
<dbReference type="PANTHER" id="PTHR42918">
    <property type="entry name" value="LYSYL-TRNA SYNTHETASE"/>
    <property type="match status" value="1"/>
</dbReference>
<dbReference type="Pfam" id="PF00152">
    <property type="entry name" value="tRNA-synt_2"/>
    <property type="match status" value="1"/>
</dbReference>
<dbReference type="Pfam" id="PF01336">
    <property type="entry name" value="tRNA_anti-codon"/>
    <property type="match status" value="1"/>
</dbReference>
<dbReference type="PIRSF" id="PIRSF039101">
    <property type="entry name" value="LysRS2"/>
    <property type="match status" value="1"/>
</dbReference>
<dbReference type="PRINTS" id="PR00982">
    <property type="entry name" value="TRNASYNTHLYS"/>
</dbReference>
<dbReference type="SUPFAM" id="SSF55681">
    <property type="entry name" value="Class II aaRS and biotin synthetases"/>
    <property type="match status" value="1"/>
</dbReference>
<dbReference type="SUPFAM" id="SSF50249">
    <property type="entry name" value="Nucleic acid-binding proteins"/>
    <property type="match status" value="1"/>
</dbReference>
<dbReference type="PROSITE" id="PS50862">
    <property type="entry name" value="AA_TRNA_LIGASE_II"/>
    <property type="match status" value="1"/>
</dbReference>
<sequence>MAQKKKEELSDLIEASGREEDLNELMRVRREKLAELRDKGIEPYGGRFERTHTARYILDNFVEMENRPVVIAGRIMSRRGMGKATFAHIQDGTGQIQIYVRLNDVGPESYELFGRLDIGDIIGVQGSVFKTRMGEITVAAESFKILSKSLRPLPEKWHGLRDVELRYRQRYVDLIVNPEVKEVFETRSKIIRACRNFLDGKGFLEVETPMMQVIPGGAAARPFITHHNALDMDLYLRIAPELYLKRLLVGGFEKVYEINRNFRNEGISTKHNPEFTMLELYQAYADYTDMMNLTEELISAVAVEALGTTKIEYQGTEIDLAPPWPRIPMLETIKVHAGLDFGALKSAEEAFKAVEQAGIGLELDPSDSWGTIVNKVFEEVVEPKLIQPTFVVDYPVEISPLAKRKAEDPELTYRFELFIYGREIANAFSELNDPIDQKGRFLKQVEKRKAGDEEAHMMDEDYINALEYGMPPAGGLGIGIDRLVMLLTNSASIRDVILFPLMKPRE</sequence>
<comment type="catalytic activity">
    <reaction evidence="1">
        <text>tRNA(Lys) + L-lysine + ATP = L-lysyl-tRNA(Lys) + AMP + diphosphate</text>
        <dbReference type="Rhea" id="RHEA:20792"/>
        <dbReference type="Rhea" id="RHEA-COMP:9696"/>
        <dbReference type="Rhea" id="RHEA-COMP:9697"/>
        <dbReference type="ChEBI" id="CHEBI:30616"/>
        <dbReference type="ChEBI" id="CHEBI:32551"/>
        <dbReference type="ChEBI" id="CHEBI:33019"/>
        <dbReference type="ChEBI" id="CHEBI:78442"/>
        <dbReference type="ChEBI" id="CHEBI:78529"/>
        <dbReference type="ChEBI" id="CHEBI:456215"/>
        <dbReference type="EC" id="6.1.1.6"/>
    </reaction>
</comment>
<comment type="cofactor">
    <cofactor evidence="1">
        <name>Mg(2+)</name>
        <dbReference type="ChEBI" id="CHEBI:18420"/>
    </cofactor>
    <text evidence="1">Binds 3 Mg(2+) ions per subunit.</text>
</comment>
<comment type="subunit">
    <text evidence="1">Homodimer.</text>
</comment>
<comment type="subcellular location">
    <subcellularLocation>
        <location evidence="1">Cytoplasm</location>
    </subcellularLocation>
</comment>
<comment type="similarity">
    <text evidence="1">Belongs to the class-II aminoacyl-tRNA synthetase family.</text>
</comment>
<reference key="1">
    <citation type="journal article" date="2008" name="Genome Res.">
        <title>The genome of Pelotomaculum thermopropionicum reveals niche-associated evolution in anaerobic microbiota.</title>
        <authorList>
            <person name="Kosaka T."/>
            <person name="Kato S."/>
            <person name="Shimoyama T."/>
            <person name="Ishii S."/>
            <person name="Abe T."/>
            <person name="Watanabe K."/>
        </authorList>
    </citation>
    <scope>NUCLEOTIDE SEQUENCE [LARGE SCALE GENOMIC DNA]</scope>
    <source>
        <strain>DSM 13744 / JCM 10971 / SI</strain>
    </source>
</reference>
<feature type="chain" id="PRO_1000204570" description="Lysine--tRNA ligase">
    <location>
        <begin position="1"/>
        <end position="506"/>
    </location>
</feature>
<feature type="binding site" evidence="1">
    <location>
        <position position="416"/>
    </location>
    <ligand>
        <name>Mg(2+)</name>
        <dbReference type="ChEBI" id="CHEBI:18420"/>
        <label>1</label>
    </ligand>
</feature>
<feature type="binding site" evidence="1">
    <location>
        <position position="423"/>
    </location>
    <ligand>
        <name>Mg(2+)</name>
        <dbReference type="ChEBI" id="CHEBI:18420"/>
        <label>1</label>
    </ligand>
</feature>
<feature type="binding site" evidence="1">
    <location>
        <position position="423"/>
    </location>
    <ligand>
        <name>Mg(2+)</name>
        <dbReference type="ChEBI" id="CHEBI:18420"/>
        <label>2</label>
    </ligand>
</feature>